<accession>Q0TCJ5</accession>
<comment type="function">
    <text evidence="1">Activates ribosomal RNA transcription. Plays a direct role in upstream activation of rRNA promoters.</text>
</comment>
<comment type="subunit">
    <text evidence="1">Homodimer.</text>
</comment>
<comment type="similarity">
    <text evidence="1">Belongs to the transcriptional regulatory Fis family.</text>
</comment>
<sequence>MFEQRVNSDVLTVSTVNSQDQVTQKPLRDSVKQALKNYFAQLNGQDVNDLYELVLAEVEQPLLDMVMQYTRGNQTRAALMMGINRGTLRKKLKKYGMN</sequence>
<proteinExistence type="inferred from homology"/>
<reference key="1">
    <citation type="journal article" date="2006" name="Mol. Microbiol.">
        <title>Role of pathogenicity island-associated integrases in the genome plasticity of uropathogenic Escherichia coli strain 536.</title>
        <authorList>
            <person name="Hochhut B."/>
            <person name="Wilde C."/>
            <person name="Balling G."/>
            <person name="Middendorf B."/>
            <person name="Dobrindt U."/>
            <person name="Brzuszkiewicz E."/>
            <person name="Gottschalk G."/>
            <person name="Carniel E."/>
            <person name="Hacker J."/>
        </authorList>
    </citation>
    <scope>NUCLEOTIDE SEQUENCE [LARGE SCALE GENOMIC DNA]</scope>
    <source>
        <strain>536 / UPEC</strain>
    </source>
</reference>
<feature type="chain" id="PRO_1000023324" description="DNA-binding protein Fis">
    <location>
        <begin position="1"/>
        <end position="98"/>
    </location>
</feature>
<feature type="DNA-binding region" description="H-T-H motif" evidence="1">
    <location>
        <begin position="74"/>
        <end position="93"/>
    </location>
</feature>
<protein>
    <recommendedName>
        <fullName evidence="1">DNA-binding protein Fis</fullName>
    </recommendedName>
</protein>
<evidence type="ECO:0000255" key="1">
    <source>
        <dbReference type="HAMAP-Rule" id="MF_00166"/>
    </source>
</evidence>
<organism>
    <name type="scientific">Escherichia coli O6:K15:H31 (strain 536 / UPEC)</name>
    <dbReference type="NCBI Taxonomy" id="362663"/>
    <lineage>
        <taxon>Bacteria</taxon>
        <taxon>Pseudomonadati</taxon>
        <taxon>Pseudomonadota</taxon>
        <taxon>Gammaproteobacteria</taxon>
        <taxon>Enterobacterales</taxon>
        <taxon>Enterobacteriaceae</taxon>
        <taxon>Escherichia</taxon>
    </lineage>
</organism>
<keyword id="KW-0010">Activator</keyword>
<keyword id="KW-0238">DNA-binding</keyword>
<keyword id="KW-0804">Transcription</keyword>
<keyword id="KW-0805">Transcription regulation</keyword>
<gene>
    <name evidence="1" type="primary">fis</name>
    <name type="ordered locus">ECP_3354</name>
</gene>
<dbReference type="EMBL" id="CP000247">
    <property type="protein sequence ID" value="ABG71334.1"/>
    <property type="molecule type" value="Genomic_DNA"/>
</dbReference>
<dbReference type="RefSeq" id="WP_000462905.1">
    <property type="nucleotide sequence ID" value="NC_008253.1"/>
</dbReference>
<dbReference type="SMR" id="Q0TCJ5"/>
<dbReference type="GeneID" id="98390389"/>
<dbReference type="KEGG" id="ecp:ECP_3354"/>
<dbReference type="HOGENOM" id="CLU_158040_3_0_6"/>
<dbReference type="Proteomes" id="UP000009182">
    <property type="component" value="Chromosome"/>
</dbReference>
<dbReference type="GO" id="GO:0003700">
    <property type="term" value="F:DNA-binding transcription factor activity"/>
    <property type="evidence" value="ECO:0007669"/>
    <property type="project" value="UniProtKB-UniRule"/>
</dbReference>
<dbReference type="GO" id="GO:0043565">
    <property type="term" value="F:sequence-specific DNA binding"/>
    <property type="evidence" value="ECO:0007669"/>
    <property type="project" value="InterPro"/>
</dbReference>
<dbReference type="FunFam" id="1.10.10.60:FF:000006">
    <property type="entry name" value="DNA-binding protein Fis"/>
    <property type="match status" value="1"/>
</dbReference>
<dbReference type="Gene3D" id="1.10.10.60">
    <property type="entry name" value="Homeodomain-like"/>
    <property type="match status" value="1"/>
</dbReference>
<dbReference type="HAMAP" id="MF_00166">
    <property type="entry name" value="DNA_binding_Fis"/>
    <property type="match status" value="1"/>
</dbReference>
<dbReference type="InterPro" id="IPR005412">
    <property type="entry name" value="Fis_DNA-bd"/>
</dbReference>
<dbReference type="InterPro" id="IPR009057">
    <property type="entry name" value="Homeodomain-like_sf"/>
</dbReference>
<dbReference type="InterPro" id="IPR002197">
    <property type="entry name" value="HTH_Fis"/>
</dbReference>
<dbReference type="InterPro" id="IPR050207">
    <property type="entry name" value="Trans_regulatory_Fis"/>
</dbReference>
<dbReference type="NCBIfam" id="NF001659">
    <property type="entry name" value="PRK00430.1"/>
    <property type="match status" value="1"/>
</dbReference>
<dbReference type="PANTHER" id="PTHR47918">
    <property type="entry name" value="DNA-BINDING PROTEIN FIS"/>
    <property type="match status" value="1"/>
</dbReference>
<dbReference type="PANTHER" id="PTHR47918:SF1">
    <property type="entry name" value="DNA-BINDING PROTEIN FIS"/>
    <property type="match status" value="1"/>
</dbReference>
<dbReference type="Pfam" id="PF02954">
    <property type="entry name" value="HTH_8"/>
    <property type="match status" value="1"/>
</dbReference>
<dbReference type="PIRSF" id="PIRSF002097">
    <property type="entry name" value="DNA-binding_Fis"/>
    <property type="match status" value="1"/>
</dbReference>
<dbReference type="PRINTS" id="PR01591">
    <property type="entry name" value="DNABINDNGFIS"/>
</dbReference>
<dbReference type="PRINTS" id="PR01590">
    <property type="entry name" value="HTHFIS"/>
</dbReference>
<dbReference type="SUPFAM" id="SSF46689">
    <property type="entry name" value="Homeodomain-like"/>
    <property type="match status" value="1"/>
</dbReference>
<name>FIS_ECOL5</name>